<evidence type="ECO:0000255" key="1"/>
<evidence type="ECO:0000255" key="2">
    <source>
        <dbReference type="HAMAP-Rule" id="MF_01710"/>
    </source>
</evidence>
<evidence type="ECO:0000269" key="3">
    <source>
    </source>
</evidence>
<keyword id="KW-0067">ATP-binding</keyword>
<keyword id="KW-1003">Cell membrane</keyword>
<keyword id="KW-0472">Membrane</keyword>
<keyword id="KW-0547">Nucleotide-binding</keyword>
<keyword id="KW-1185">Reference proteome</keyword>
<keyword id="KW-1278">Translocase</keyword>
<keyword id="KW-0813">Transport</keyword>
<comment type="function">
    <text evidence="2 3">ATP-binding (A) component of a common energy-coupling factor (ECF) ABC-transporter complex. Unlike classic ABC transporters this ECF transporter provides the energy necessary to transport a number of different substrates including 5-formyltetrahydrofolate and thiamine. Expression of the complex plus FolT or ThiT in Lactococcus lactis subsp. cremoris (strain NZ9000) allows 5-formyltetrahydrofolate or thiamine uptake respectively; 5-formyltetrahydrofolate or thiamine are not taken up in the absence of FolT/ThiT or the EcfA1A2T complex. Deenergized L.lactis subsp. cremoris (treated with 2-deoxyglucose) do not take up substrate.</text>
</comment>
<comment type="subunit">
    <text evidence="3">Forms a stable energy-coupling factor (ECF) transporter complex probably composed of 2 membrane-embedded substrate-binding proteins (S component), 2 ATP-binding proteins (A component) and 2 transmembrane proteins (T component). This complex interacts with a number of substrate-specific components, including FolT and ThiT for 5-formyltetrahydrofolate and thiamine respectively.</text>
</comment>
<comment type="subcellular location">
    <subcellularLocation>
        <location evidence="2">Cell membrane</location>
        <topology evidence="2">Peripheral membrane protein</topology>
    </subcellularLocation>
</comment>
<comment type="similarity">
    <text evidence="2">Belongs to the ABC transporter superfamily. Energy-coupling factor EcfA family.</text>
</comment>
<reference key="1">
    <citation type="journal article" date="2006" name="Proc. Natl. Acad. Sci. U.S.A.">
        <title>Comparative genomics of the lactic acid bacteria.</title>
        <authorList>
            <person name="Makarova K.S."/>
            <person name="Slesarev A."/>
            <person name="Wolf Y.I."/>
            <person name="Sorokin A."/>
            <person name="Mirkin B."/>
            <person name="Koonin E.V."/>
            <person name="Pavlov A."/>
            <person name="Pavlova N."/>
            <person name="Karamychev V."/>
            <person name="Polouchine N."/>
            <person name="Shakhova V."/>
            <person name="Grigoriev I."/>
            <person name="Lou Y."/>
            <person name="Rohksar D."/>
            <person name="Lucas S."/>
            <person name="Huang K."/>
            <person name="Goodstein D.M."/>
            <person name="Hawkins T."/>
            <person name="Plengvidhya V."/>
            <person name="Welker D."/>
            <person name="Hughes J."/>
            <person name="Goh Y."/>
            <person name="Benson A."/>
            <person name="Baldwin K."/>
            <person name="Lee J.-H."/>
            <person name="Diaz-Muniz I."/>
            <person name="Dosti B."/>
            <person name="Smeianov V."/>
            <person name="Wechter W."/>
            <person name="Barabote R."/>
            <person name="Lorca G."/>
            <person name="Altermann E."/>
            <person name="Barrangou R."/>
            <person name="Ganesan B."/>
            <person name="Xie Y."/>
            <person name="Rawsthorne H."/>
            <person name="Tamir D."/>
            <person name="Parker C."/>
            <person name="Breidt F."/>
            <person name="Broadbent J.R."/>
            <person name="Hutkins R."/>
            <person name="O'Sullivan D."/>
            <person name="Steele J."/>
            <person name="Unlu G."/>
            <person name="Saier M.H. Jr."/>
            <person name="Klaenhammer T."/>
            <person name="Richardson P."/>
            <person name="Kozyavkin S."/>
            <person name="Weimer B.C."/>
            <person name="Mills D.A."/>
        </authorList>
    </citation>
    <scope>NUCLEOTIDE SEQUENCE [LARGE SCALE GENOMIC DNA]</scope>
    <source>
        <strain>ATCC 334 / BCRC 17002 / CCUG 31169 / CIP 107868 / KCTC 3260 / NRRL B-441</strain>
    </source>
</reference>
<reference key="2">
    <citation type="journal article" date="2009" name="J. Bacteriol.">
        <title>A novel class of modular transporters for vitamins in prokaryotes.</title>
        <authorList>
            <person name="Rodionov D.A."/>
            <person name="Hebbeln P."/>
            <person name="Eudes A."/>
            <person name="ter Beek J."/>
            <person name="Rodionova I.A."/>
            <person name="Erkens G.B."/>
            <person name="Slotboom D.J."/>
            <person name="Gelfand M.S."/>
            <person name="Osterman A.L."/>
            <person name="Hanson A.D."/>
            <person name="Eitinger T."/>
        </authorList>
    </citation>
    <scope>FUNCTION AS A TRANSPORT COMPONENT</scope>
    <scope>SUBUNIT</scope>
    <scope>SUBSTRATES</scope>
    <scope>EXPRESSION IN L.LACTIS</scope>
    <source>
        <strain>ATCC 334 / BCRC 17002 / CCUG 31169 / CIP 107868 / KCTC 3260 / NRRL B-441</strain>
    </source>
</reference>
<protein>
    <recommendedName>
        <fullName evidence="2">Energy-coupling factor transporter ATP-binding protein EcfA2</fullName>
        <shortName evidence="2">ECF transporter A component EcfA2</shortName>
        <ecNumber evidence="2">7.-.-.-</ecNumber>
    </recommendedName>
    <alternativeName>
        <fullName>ECF transporter A component EcfA'</fullName>
    </alternativeName>
</protein>
<accession>Q035B3</accession>
<dbReference type="EC" id="7.-.-.-" evidence="2"/>
<dbReference type="EMBL" id="CP000423">
    <property type="protein sequence ID" value="ABJ71209.1"/>
    <property type="molecule type" value="Genomic_DNA"/>
</dbReference>
<dbReference type="RefSeq" id="WP_003567503.1">
    <property type="nucleotide sequence ID" value="NC_008526.1"/>
</dbReference>
<dbReference type="RefSeq" id="YP_807651.1">
    <property type="nucleotide sequence ID" value="NC_008526.1"/>
</dbReference>
<dbReference type="SMR" id="Q035B3"/>
<dbReference type="STRING" id="321967.LSEI_2473"/>
<dbReference type="PaxDb" id="321967-LSEI_2473"/>
<dbReference type="KEGG" id="lca:LSEI_2473"/>
<dbReference type="PATRIC" id="fig|321967.11.peg.2427"/>
<dbReference type="HOGENOM" id="CLU_000604_1_22_9"/>
<dbReference type="Proteomes" id="UP000001651">
    <property type="component" value="Chromosome"/>
</dbReference>
<dbReference type="GO" id="GO:0043190">
    <property type="term" value="C:ATP-binding cassette (ABC) transporter complex"/>
    <property type="evidence" value="ECO:0007669"/>
    <property type="project" value="TreeGrafter"/>
</dbReference>
<dbReference type="GO" id="GO:0005524">
    <property type="term" value="F:ATP binding"/>
    <property type="evidence" value="ECO:0007669"/>
    <property type="project" value="UniProtKB-KW"/>
</dbReference>
<dbReference type="GO" id="GO:0016887">
    <property type="term" value="F:ATP hydrolysis activity"/>
    <property type="evidence" value="ECO:0007669"/>
    <property type="project" value="InterPro"/>
</dbReference>
<dbReference type="GO" id="GO:0042626">
    <property type="term" value="F:ATPase-coupled transmembrane transporter activity"/>
    <property type="evidence" value="ECO:0007669"/>
    <property type="project" value="TreeGrafter"/>
</dbReference>
<dbReference type="CDD" id="cd03225">
    <property type="entry name" value="ABC_cobalt_CbiO_domain1"/>
    <property type="match status" value="1"/>
</dbReference>
<dbReference type="FunFam" id="3.40.50.300:FF:000224">
    <property type="entry name" value="Energy-coupling factor transporter ATP-binding protein EcfA"/>
    <property type="match status" value="1"/>
</dbReference>
<dbReference type="Gene3D" id="3.40.50.300">
    <property type="entry name" value="P-loop containing nucleotide triphosphate hydrolases"/>
    <property type="match status" value="1"/>
</dbReference>
<dbReference type="InterPro" id="IPR003593">
    <property type="entry name" value="AAA+_ATPase"/>
</dbReference>
<dbReference type="InterPro" id="IPR003439">
    <property type="entry name" value="ABC_transporter-like_ATP-bd"/>
</dbReference>
<dbReference type="InterPro" id="IPR017871">
    <property type="entry name" value="ABC_transporter-like_CS"/>
</dbReference>
<dbReference type="InterPro" id="IPR015856">
    <property type="entry name" value="ABC_transpr_CbiO/EcfA_su"/>
</dbReference>
<dbReference type="InterPro" id="IPR050095">
    <property type="entry name" value="ECF_ABC_transporter_ATP-bd"/>
</dbReference>
<dbReference type="InterPro" id="IPR030946">
    <property type="entry name" value="EcfA2"/>
</dbReference>
<dbReference type="InterPro" id="IPR027417">
    <property type="entry name" value="P-loop_NTPase"/>
</dbReference>
<dbReference type="NCBIfam" id="TIGR04521">
    <property type="entry name" value="ECF_ATPase_2"/>
    <property type="match status" value="1"/>
</dbReference>
<dbReference type="NCBIfam" id="NF010155">
    <property type="entry name" value="PRK13634.1"/>
    <property type="match status" value="1"/>
</dbReference>
<dbReference type="PANTHER" id="PTHR43553:SF27">
    <property type="entry name" value="ENERGY-COUPLING FACTOR TRANSPORTER ATP-BINDING PROTEIN ECFA2"/>
    <property type="match status" value="1"/>
</dbReference>
<dbReference type="PANTHER" id="PTHR43553">
    <property type="entry name" value="HEAVY METAL TRANSPORTER"/>
    <property type="match status" value="1"/>
</dbReference>
<dbReference type="Pfam" id="PF00005">
    <property type="entry name" value="ABC_tran"/>
    <property type="match status" value="1"/>
</dbReference>
<dbReference type="SMART" id="SM00382">
    <property type="entry name" value="AAA"/>
    <property type="match status" value="1"/>
</dbReference>
<dbReference type="SUPFAM" id="SSF52540">
    <property type="entry name" value="P-loop containing nucleoside triphosphate hydrolases"/>
    <property type="match status" value="1"/>
</dbReference>
<dbReference type="PROSITE" id="PS00211">
    <property type="entry name" value="ABC_TRANSPORTER_1"/>
    <property type="match status" value="1"/>
</dbReference>
<dbReference type="PROSITE" id="PS50893">
    <property type="entry name" value="ABC_TRANSPORTER_2"/>
    <property type="match status" value="1"/>
</dbReference>
<dbReference type="PROSITE" id="PS51246">
    <property type="entry name" value="CBIO"/>
    <property type="match status" value="1"/>
</dbReference>
<name>ECFA2_LACP3</name>
<gene>
    <name evidence="2" type="primary">ecfA2</name>
    <name type="synonym">cbiO1</name>
    <name type="synonym">ecfA'</name>
    <name type="ordered locus">LSEI_2473</name>
</gene>
<sequence length="288" mass="31235">MDITFDHVSFTYQAGTPFAGDGIKDVSGVIRDGSYTAIIGHTGSGKSTILQHLNALLKPTSGTVTIGDKVITNETNNKNLKPLRQKVGMVFQFAENQLFEQTVAKDIAFGPQNFGVSEKDALALADKMVKMVGLPHDVLEKSPFDLSGGQMRRVAIAGVLAMQPEVLVLDEPTAGLDPSGRHEMMQMFEQLHREQGQTIVLVTHQMDDVADYADTVWVMAEGKLIKTGTPREIFADPAWLKANQLGLPKTAQLAQQLAAKGFHFDPQPLTESELADQLVPQIGGGQRG</sequence>
<feature type="chain" id="PRO_0000287945" description="Energy-coupling factor transporter ATP-binding protein EcfA2">
    <location>
        <begin position="1"/>
        <end position="288"/>
    </location>
</feature>
<feature type="domain" description="ABC transporter" evidence="2">
    <location>
        <begin position="3"/>
        <end position="246"/>
    </location>
</feature>
<feature type="active site" description="Proton acceptor" evidence="1">
    <location>
        <position position="171"/>
    </location>
</feature>
<feature type="binding site" evidence="2">
    <location>
        <begin position="40"/>
        <end position="47"/>
    </location>
    <ligand>
        <name>ATP</name>
        <dbReference type="ChEBI" id="CHEBI:30616"/>
    </ligand>
</feature>
<organism>
    <name type="scientific">Lacticaseibacillus paracasei (strain ATCC 334 / BCRC 17002 / CCUG 31169 / CIP 107868 / KCTC 3260 / NRRL B-441)</name>
    <name type="common">Lactobacillus paracasei</name>
    <dbReference type="NCBI Taxonomy" id="321967"/>
    <lineage>
        <taxon>Bacteria</taxon>
        <taxon>Bacillati</taxon>
        <taxon>Bacillota</taxon>
        <taxon>Bacilli</taxon>
        <taxon>Lactobacillales</taxon>
        <taxon>Lactobacillaceae</taxon>
        <taxon>Lacticaseibacillus</taxon>
    </lineage>
</organism>
<proteinExistence type="evidence at protein level"/>